<sequence>MDSMMNQKTVLAVTDDVVLPVSSVLAIMKELGKEVIESFDPLIITQASTINQFPLDASSVEAVLAISKTSDFPSDKICGEFSRILKPGGTVSVCKVLEGETGEIQQTIQRRVTLAGFLEPQCLDLKSIKLSTFSLSFGIKAKKPSWKIGSSFALKKPVTNLFKIDLDDDVDLIDEDSLLTEEDLMKPQLPVASGCETTKKACKNCVCGRAEIEEKAVKLGLTEDQIENPQSSCGSCGLGDAFRCGTCPYKGLPPFKLGEKVTLSQNFLEADI</sequence>
<comment type="function">
    <text evidence="1 3">Component of the cytosolic iron-sulfur (Fe-S) protein assembly (CIA) machinery. Required for the maturation of extramitochondrial Fe-S proteins. Part of an electron transfer chain functioning in an early step of cytosolic Fe-S biogenesis, facilitating the de novo assembly of a [4Fe-4S] cluster on the cytosolic Fe-S scaffold complex. Electrons are transferred from NADPH via FAD- and FMN-containing diflavin oxidoreductase TAH18/ATR3 (PubMed:23754812). Together with the diflavin oxidoreductase, also required for the assembly of the diferric tyrosyl radical cofactor of ribonucleotide reductase (RNR), probably by providing electrons for reduction during radical cofactor maturation in the catalytic small subunit (By similarity). Required for embryo development (PubMed:23754812).</text>
</comment>
<comment type="cofactor">
    <cofactor evidence="1 3">
        <name>[2Fe-2S] cluster</name>
        <dbReference type="ChEBI" id="CHEBI:190135"/>
    </cofactor>
</comment>
<comment type="cofactor">
    <cofactor evidence="1 3">
        <name>[4Fe-4S] cluster</name>
        <dbReference type="ChEBI" id="CHEBI:49883"/>
    </cofactor>
</comment>
<comment type="subunit">
    <text evidence="1 2">Monomer (By similarity). Interacts with ATR3 (PubMed:20406405).</text>
</comment>
<comment type="subcellular location">
    <subcellularLocation>
        <location evidence="1">Cytoplasm</location>
    </subcellularLocation>
    <subcellularLocation>
        <location evidence="1">Mitochondrion intermembrane space</location>
    </subcellularLocation>
</comment>
<comment type="alternative products">
    <event type="alternative splicing"/>
    <isoform>
        <id>Q8L7Z3-1</id>
        <name>1</name>
        <sequence type="displayed"/>
    </isoform>
    <isoform>
        <id>Q8L7Z3-2</id>
        <name>2</name>
        <sequence type="described" ref="VSP_042905"/>
    </isoform>
</comment>
<comment type="domain">
    <text evidence="1">The C-terminal domain binds 2 Fe-S clusters but is otherwise mostly in an intrinsically disordered conformation.</text>
</comment>
<comment type="domain">
    <text evidence="1">The N-terminal domain has structural similarity with S-adenosyl-L-methionine-dependent methyltransferases, but does not bind S-adenosyl-L-methionine. It is required for correct assembly of the 2 Fe-S clusters.</text>
</comment>
<comment type="domain">
    <text evidence="1">The twin Cx2C motifs are involved in the recognition by the mitochondrial MIA40-ERV1 disulfide relay system. The formation of 2 disulfide bonds in the Cx2C motifs through dithiol/disulfide exchange reactions effectively traps the protein in the mitochondrial intermembrane space.</text>
</comment>
<comment type="similarity">
    <text evidence="1">Belongs to the anamorsin family.</text>
</comment>
<comment type="sequence caution" evidence="5">
    <conflict type="erroneous gene model prediction">
        <sequence resource="EMBL-CDS" id="AAM65895"/>
    </conflict>
</comment>
<accession>Q8L7Z3</accession>
<accession>F4JWM7</accession>
<accession>Q8L9M1</accession>
<accession>Q8RXJ2</accession>
<feature type="chain" id="PRO_0000392333" description="Anamorsin homolog">
    <location>
        <begin position="1"/>
        <end position="272"/>
    </location>
</feature>
<feature type="region of interest" description="N-terminal SAM-like domain" evidence="1">
    <location>
        <begin position="1"/>
        <end position="156"/>
    </location>
</feature>
<feature type="region of interest" description="Linker" evidence="1">
    <location>
        <begin position="157"/>
        <end position="185"/>
    </location>
</feature>
<feature type="region of interest" description="Fe-S binding site A" evidence="1">
    <location>
        <begin position="195"/>
        <end position="207"/>
    </location>
</feature>
<feature type="region of interest" description="Fe-S binding site B" evidence="1">
    <location>
        <begin position="233"/>
        <end position="247"/>
    </location>
</feature>
<feature type="short sequence motif" description="Cx2C motif 1" evidence="1">
    <location>
        <begin position="233"/>
        <end position="236"/>
    </location>
</feature>
<feature type="short sequence motif" description="Cx2C motif 2" evidence="1">
    <location>
        <begin position="244"/>
        <end position="247"/>
    </location>
</feature>
<feature type="binding site" evidence="1">
    <location>
        <position position="195"/>
    </location>
    <ligand>
        <name>[2Fe-2S] cluster</name>
        <dbReference type="ChEBI" id="CHEBI:190135"/>
    </ligand>
</feature>
<feature type="binding site" evidence="1">
    <location>
        <position position="202"/>
    </location>
    <ligand>
        <name>[2Fe-2S] cluster</name>
        <dbReference type="ChEBI" id="CHEBI:190135"/>
    </ligand>
</feature>
<feature type="binding site" evidence="1">
    <location>
        <position position="205"/>
    </location>
    <ligand>
        <name>[2Fe-2S] cluster</name>
        <dbReference type="ChEBI" id="CHEBI:190135"/>
    </ligand>
</feature>
<feature type="binding site" evidence="1">
    <location>
        <position position="207"/>
    </location>
    <ligand>
        <name>[2Fe-2S] cluster</name>
        <dbReference type="ChEBI" id="CHEBI:190135"/>
    </ligand>
</feature>
<feature type="binding site" evidence="1">
    <location>
        <position position="233"/>
    </location>
    <ligand>
        <name>[4Fe-4S] cluster</name>
        <dbReference type="ChEBI" id="CHEBI:49883"/>
    </ligand>
</feature>
<feature type="binding site" evidence="1">
    <location>
        <position position="236"/>
    </location>
    <ligand>
        <name>[4Fe-4S] cluster</name>
        <dbReference type="ChEBI" id="CHEBI:49883"/>
    </ligand>
</feature>
<feature type="binding site" evidence="1">
    <location>
        <position position="244"/>
    </location>
    <ligand>
        <name>[4Fe-4S] cluster</name>
        <dbReference type="ChEBI" id="CHEBI:49883"/>
    </ligand>
</feature>
<feature type="binding site" evidence="1">
    <location>
        <position position="247"/>
    </location>
    <ligand>
        <name>[4Fe-4S] cluster</name>
        <dbReference type="ChEBI" id="CHEBI:49883"/>
    </ligand>
</feature>
<feature type="splice variant" id="VSP_042905" description="In isoform 2." evidence="4">
    <location>
        <begin position="1"/>
        <end position="3"/>
    </location>
</feature>
<feature type="sequence conflict" description="In Ref. 3; AAL87328." evidence="5" ref="3">
    <original>I</original>
    <variation>K</variation>
    <location>
        <position position="77"/>
    </location>
</feature>
<reference key="1">
    <citation type="journal article" date="2000" name="Nature">
        <title>Sequence and analysis of chromosome 5 of the plant Arabidopsis thaliana.</title>
        <authorList>
            <person name="Tabata S."/>
            <person name="Kaneko T."/>
            <person name="Nakamura Y."/>
            <person name="Kotani H."/>
            <person name="Kato T."/>
            <person name="Asamizu E."/>
            <person name="Miyajima N."/>
            <person name="Sasamoto S."/>
            <person name="Kimura T."/>
            <person name="Hosouchi T."/>
            <person name="Kawashima K."/>
            <person name="Kohara M."/>
            <person name="Matsumoto M."/>
            <person name="Matsuno A."/>
            <person name="Muraki A."/>
            <person name="Nakayama S."/>
            <person name="Nakazaki N."/>
            <person name="Naruo K."/>
            <person name="Okumura S."/>
            <person name="Shinpo S."/>
            <person name="Takeuchi C."/>
            <person name="Wada T."/>
            <person name="Watanabe A."/>
            <person name="Yamada M."/>
            <person name="Yasuda M."/>
            <person name="Sato S."/>
            <person name="de la Bastide M."/>
            <person name="Huang E."/>
            <person name="Spiegel L."/>
            <person name="Gnoj L."/>
            <person name="O'Shaughnessy A."/>
            <person name="Preston R."/>
            <person name="Habermann K."/>
            <person name="Murray J."/>
            <person name="Johnson D."/>
            <person name="Rohlfing T."/>
            <person name="Nelson J."/>
            <person name="Stoneking T."/>
            <person name="Pepin K."/>
            <person name="Spieth J."/>
            <person name="Sekhon M."/>
            <person name="Armstrong J."/>
            <person name="Becker M."/>
            <person name="Belter E."/>
            <person name="Cordum H."/>
            <person name="Cordes M."/>
            <person name="Courtney L."/>
            <person name="Courtney W."/>
            <person name="Dante M."/>
            <person name="Du H."/>
            <person name="Edwards J."/>
            <person name="Fryman J."/>
            <person name="Haakensen B."/>
            <person name="Lamar E."/>
            <person name="Latreille P."/>
            <person name="Leonard S."/>
            <person name="Meyer R."/>
            <person name="Mulvaney E."/>
            <person name="Ozersky P."/>
            <person name="Riley A."/>
            <person name="Strowmatt C."/>
            <person name="Wagner-McPherson C."/>
            <person name="Wollam A."/>
            <person name="Yoakum M."/>
            <person name="Bell M."/>
            <person name="Dedhia N."/>
            <person name="Parnell L."/>
            <person name="Shah R."/>
            <person name="Rodriguez M."/>
            <person name="Hoon See L."/>
            <person name="Vil D."/>
            <person name="Baker J."/>
            <person name="Kirchoff K."/>
            <person name="Toth K."/>
            <person name="King L."/>
            <person name="Bahret A."/>
            <person name="Miller B."/>
            <person name="Marra M.A."/>
            <person name="Martienssen R."/>
            <person name="McCombie W.R."/>
            <person name="Wilson R.K."/>
            <person name="Murphy G."/>
            <person name="Bancroft I."/>
            <person name="Volckaert G."/>
            <person name="Wambutt R."/>
            <person name="Duesterhoeft A."/>
            <person name="Stiekema W."/>
            <person name="Pohl T."/>
            <person name="Entian K.-D."/>
            <person name="Terryn N."/>
            <person name="Hartley N."/>
            <person name="Bent E."/>
            <person name="Johnson S."/>
            <person name="Langham S.-A."/>
            <person name="McCullagh B."/>
            <person name="Robben J."/>
            <person name="Grymonprez B."/>
            <person name="Zimmermann W."/>
            <person name="Ramsperger U."/>
            <person name="Wedler H."/>
            <person name="Balke K."/>
            <person name="Wedler E."/>
            <person name="Peters S."/>
            <person name="van Staveren M."/>
            <person name="Dirkse W."/>
            <person name="Mooijman P."/>
            <person name="Klein Lankhorst R."/>
            <person name="Weitzenegger T."/>
            <person name="Bothe G."/>
            <person name="Rose M."/>
            <person name="Hauf J."/>
            <person name="Berneiser S."/>
            <person name="Hempel S."/>
            <person name="Feldpausch M."/>
            <person name="Lamberth S."/>
            <person name="Villarroel R."/>
            <person name="Gielen J."/>
            <person name="Ardiles W."/>
            <person name="Bents O."/>
            <person name="Lemcke K."/>
            <person name="Kolesov G."/>
            <person name="Mayer K.F.X."/>
            <person name="Rudd S."/>
            <person name="Schoof H."/>
            <person name="Schueller C."/>
            <person name="Zaccaria P."/>
            <person name="Mewes H.-W."/>
            <person name="Bevan M."/>
            <person name="Fransz P.F."/>
        </authorList>
    </citation>
    <scope>NUCLEOTIDE SEQUENCE [LARGE SCALE GENOMIC DNA]</scope>
    <source>
        <strain>cv. Columbia</strain>
    </source>
</reference>
<reference key="2">
    <citation type="journal article" date="2017" name="Plant J.">
        <title>Araport11: a complete reannotation of the Arabidopsis thaliana reference genome.</title>
        <authorList>
            <person name="Cheng C.Y."/>
            <person name="Krishnakumar V."/>
            <person name="Chan A.P."/>
            <person name="Thibaud-Nissen F."/>
            <person name="Schobel S."/>
            <person name="Town C.D."/>
        </authorList>
    </citation>
    <scope>GENOME REANNOTATION</scope>
    <source>
        <strain>cv. Columbia</strain>
    </source>
</reference>
<reference key="3">
    <citation type="journal article" date="2003" name="Science">
        <title>Empirical analysis of transcriptional activity in the Arabidopsis genome.</title>
        <authorList>
            <person name="Yamada K."/>
            <person name="Lim J."/>
            <person name="Dale J.M."/>
            <person name="Chen H."/>
            <person name="Shinn P."/>
            <person name="Palm C.J."/>
            <person name="Southwick A.M."/>
            <person name="Wu H.C."/>
            <person name="Kim C.J."/>
            <person name="Nguyen M."/>
            <person name="Pham P.K."/>
            <person name="Cheuk R.F."/>
            <person name="Karlin-Newmann G."/>
            <person name="Liu S.X."/>
            <person name="Lam B."/>
            <person name="Sakano H."/>
            <person name="Wu T."/>
            <person name="Yu G."/>
            <person name="Miranda M."/>
            <person name="Quach H.L."/>
            <person name="Tripp M."/>
            <person name="Chang C.H."/>
            <person name="Lee J.M."/>
            <person name="Toriumi M.J."/>
            <person name="Chan M.M."/>
            <person name="Tang C.C."/>
            <person name="Onodera C.S."/>
            <person name="Deng J.M."/>
            <person name="Akiyama K."/>
            <person name="Ansari Y."/>
            <person name="Arakawa T."/>
            <person name="Banh J."/>
            <person name="Banno F."/>
            <person name="Bowser L."/>
            <person name="Brooks S.Y."/>
            <person name="Carninci P."/>
            <person name="Chao Q."/>
            <person name="Choy N."/>
            <person name="Enju A."/>
            <person name="Goldsmith A.D."/>
            <person name="Gurjal M."/>
            <person name="Hansen N.F."/>
            <person name="Hayashizaki Y."/>
            <person name="Johnson-Hopson C."/>
            <person name="Hsuan V.W."/>
            <person name="Iida K."/>
            <person name="Karnes M."/>
            <person name="Khan S."/>
            <person name="Koesema E."/>
            <person name="Ishida J."/>
            <person name="Jiang P.X."/>
            <person name="Jones T."/>
            <person name="Kawai J."/>
            <person name="Kamiya A."/>
            <person name="Meyers C."/>
            <person name="Nakajima M."/>
            <person name="Narusaka M."/>
            <person name="Seki M."/>
            <person name="Sakurai T."/>
            <person name="Satou M."/>
            <person name="Tamse R."/>
            <person name="Vaysberg M."/>
            <person name="Wallender E.K."/>
            <person name="Wong C."/>
            <person name="Yamamura Y."/>
            <person name="Yuan S."/>
            <person name="Shinozaki K."/>
            <person name="Davis R.W."/>
            <person name="Theologis A."/>
            <person name="Ecker J.R."/>
        </authorList>
    </citation>
    <scope>NUCLEOTIDE SEQUENCE [LARGE SCALE MRNA] (ISOFORMS 1 AND 2)</scope>
    <source>
        <strain>cv. Columbia</strain>
    </source>
</reference>
<reference key="4">
    <citation type="submission" date="2002-03" db="EMBL/GenBank/DDBJ databases">
        <title>Full-length cDNA from Arabidopsis thaliana.</title>
        <authorList>
            <person name="Brover V.V."/>
            <person name="Troukhan M.E."/>
            <person name="Alexandrov N.A."/>
            <person name="Lu Y.-P."/>
            <person name="Flavell R.B."/>
            <person name="Feldmann K.A."/>
        </authorList>
    </citation>
    <scope>NUCLEOTIDE SEQUENCE [LARGE SCALE MRNA] (ISOFORM 1)</scope>
</reference>
<reference key="5">
    <citation type="journal article" date="2010" name="New Phytol.">
        <title>ATR3 encodes a diflavin reductase essential for Arabidopsis embryo development.</title>
        <authorList>
            <person name="Varadarajan J."/>
            <person name="Guilleminot J."/>
            <person name="Saint-Jore-Dupas C."/>
            <person name="Piegu B."/>
            <person name="Chaboute M.E."/>
            <person name="Gomord V."/>
            <person name="Coolbaugh R.C."/>
            <person name="Devic M."/>
            <person name="Delorme V."/>
        </authorList>
    </citation>
    <scope>INTERACTION WITH ATR3</scope>
</reference>
<reference key="6">
    <citation type="journal article" date="2013" name="Philos. Trans. R. Soc. Lond., B, Biol. Sci.">
        <title>Requirements of the cytosolic iron-sulfur cluster assembly pathway in Arabidopsis.</title>
        <authorList>
            <person name="Bernard D.G."/>
            <person name="Netz D.J."/>
            <person name="Lagny T.J."/>
            <person name="Pierik A.J."/>
            <person name="Balk J."/>
        </authorList>
    </citation>
    <scope>FUNCTION</scope>
    <scope>COFACTOR</scope>
</reference>
<evidence type="ECO:0000255" key="1">
    <source>
        <dbReference type="HAMAP-Rule" id="MF_03115"/>
    </source>
</evidence>
<evidence type="ECO:0000269" key="2">
    <source>
    </source>
</evidence>
<evidence type="ECO:0000269" key="3">
    <source>
    </source>
</evidence>
<evidence type="ECO:0000303" key="4">
    <source>
    </source>
</evidence>
<evidence type="ECO:0000305" key="5"/>
<dbReference type="EMBL" id="AC051626">
    <property type="status" value="NOT_ANNOTATED_CDS"/>
    <property type="molecule type" value="Genomic_DNA"/>
</dbReference>
<dbReference type="EMBL" id="CP002688">
    <property type="protein sequence ID" value="AED92550.1"/>
    <property type="molecule type" value="Genomic_DNA"/>
</dbReference>
<dbReference type="EMBL" id="CP002688">
    <property type="protein sequence ID" value="AED92551.1"/>
    <property type="molecule type" value="Genomic_DNA"/>
</dbReference>
<dbReference type="EMBL" id="CP002688">
    <property type="protein sequence ID" value="AED92552.1"/>
    <property type="molecule type" value="Genomic_DNA"/>
</dbReference>
<dbReference type="EMBL" id="AY080855">
    <property type="protein sequence ID" value="AAL87328.1"/>
    <property type="molecule type" value="mRNA"/>
</dbReference>
<dbReference type="EMBL" id="AY123986">
    <property type="protein sequence ID" value="AAM74499.1"/>
    <property type="molecule type" value="mRNA"/>
</dbReference>
<dbReference type="EMBL" id="BT000943">
    <property type="protein sequence ID" value="AAN41343.1"/>
    <property type="molecule type" value="mRNA"/>
</dbReference>
<dbReference type="EMBL" id="BT001035">
    <property type="protein sequence ID" value="AAN46789.1"/>
    <property type="molecule type" value="mRNA"/>
</dbReference>
<dbReference type="EMBL" id="AY088356">
    <property type="protein sequence ID" value="AAM65895.1"/>
    <property type="status" value="ALT_SEQ"/>
    <property type="molecule type" value="mRNA"/>
</dbReference>
<dbReference type="RefSeq" id="NP_001078602.1">
    <molecule id="Q8L7Z3-1"/>
    <property type="nucleotide sequence ID" value="NM_001085133.2"/>
</dbReference>
<dbReference type="RefSeq" id="NP_568363.1">
    <molecule id="Q8L7Z3-1"/>
    <property type="nucleotide sequence ID" value="NM_121845.3"/>
</dbReference>
<dbReference type="RefSeq" id="NP_850844.1">
    <molecule id="Q8L7Z3-2"/>
    <property type="nucleotide sequence ID" value="NM_180513.1"/>
</dbReference>
<dbReference type="SMR" id="Q8L7Z3"/>
<dbReference type="BioGRID" id="17234">
    <property type="interactions" value="4"/>
</dbReference>
<dbReference type="FunCoup" id="Q8L7Z3">
    <property type="interactions" value="4138"/>
</dbReference>
<dbReference type="IntAct" id="Q8L7Z3">
    <property type="interactions" value="1"/>
</dbReference>
<dbReference type="STRING" id="3702.Q8L7Z3"/>
<dbReference type="iPTMnet" id="Q8L7Z3"/>
<dbReference type="PaxDb" id="3702-AT5G18400.2"/>
<dbReference type="ProteomicsDB" id="242300">
    <molecule id="Q8L7Z3-1"/>
</dbReference>
<dbReference type="EnsemblPlants" id="AT5G18400.1">
    <molecule id="Q8L7Z3-2"/>
    <property type="protein sequence ID" value="AT5G18400.1"/>
    <property type="gene ID" value="AT5G18400"/>
</dbReference>
<dbReference type="EnsemblPlants" id="AT5G18400.2">
    <molecule id="Q8L7Z3-1"/>
    <property type="protein sequence ID" value="AT5G18400.2"/>
    <property type="gene ID" value="AT5G18400"/>
</dbReference>
<dbReference type="EnsemblPlants" id="AT5G18400.3">
    <molecule id="Q8L7Z3-1"/>
    <property type="protein sequence ID" value="AT5G18400.3"/>
    <property type="gene ID" value="AT5G18400"/>
</dbReference>
<dbReference type="GeneID" id="831958"/>
<dbReference type="Gramene" id="AT5G18400.1">
    <molecule id="Q8L7Z3-2"/>
    <property type="protein sequence ID" value="AT5G18400.1"/>
    <property type="gene ID" value="AT5G18400"/>
</dbReference>
<dbReference type="Gramene" id="AT5G18400.2">
    <molecule id="Q8L7Z3-1"/>
    <property type="protein sequence ID" value="AT5G18400.2"/>
    <property type="gene ID" value="AT5G18400"/>
</dbReference>
<dbReference type="Gramene" id="AT5G18400.3">
    <molecule id="Q8L7Z3-1"/>
    <property type="protein sequence ID" value="AT5G18400.3"/>
    <property type="gene ID" value="AT5G18400"/>
</dbReference>
<dbReference type="KEGG" id="ath:AT5G18400"/>
<dbReference type="Araport" id="AT5G18400"/>
<dbReference type="TAIR" id="AT5G18400">
    <property type="gene designation" value="DRE2"/>
</dbReference>
<dbReference type="eggNOG" id="KOG4020">
    <property type="taxonomic scope" value="Eukaryota"/>
</dbReference>
<dbReference type="InParanoid" id="Q8L7Z3"/>
<dbReference type="OMA" id="ACKNCTW"/>
<dbReference type="OrthoDB" id="311633at2759"/>
<dbReference type="PhylomeDB" id="Q8L7Z3"/>
<dbReference type="PRO" id="PR:Q8L7Z3"/>
<dbReference type="Proteomes" id="UP000006548">
    <property type="component" value="Chromosome 5"/>
</dbReference>
<dbReference type="ExpressionAtlas" id="Q8L7Z3">
    <property type="expression patterns" value="baseline and differential"/>
</dbReference>
<dbReference type="GO" id="GO:0005758">
    <property type="term" value="C:mitochondrial intermembrane space"/>
    <property type="evidence" value="ECO:0007669"/>
    <property type="project" value="UniProtKB-SubCell"/>
</dbReference>
<dbReference type="GO" id="GO:0051537">
    <property type="term" value="F:2 iron, 2 sulfur cluster binding"/>
    <property type="evidence" value="ECO:0000314"/>
    <property type="project" value="TAIR"/>
</dbReference>
<dbReference type="GO" id="GO:0051539">
    <property type="term" value="F:4 iron, 4 sulfur cluster binding"/>
    <property type="evidence" value="ECO:0000314"/>
    <property type="project" value="TAIR"/>
</dbReference>
<dbReference type="GO" id="GO:0009055">
    <property type="term" value="F:electron transfer activity"/>
    <property type="evidence" value="ECO:0007669"/>
    <property type="project" value="UniProtKB-UniRule"/>
</dbReference>
<dbReference type="GO" id="GO:0046872">
    <property type="term" value="F:metal ion binding"/>
    <property type="evidence" value="ECO:0007669"/>
    <property type="project" value="UniProtKB-KW"/>
</dbReference>
<dbReference type="GO" id="GO:0016226">
    <property type="term" value="P:iron-sulfur cluster assembly"/>
    <property type="evidence" value="ECO:0000316"/>
    <property type="project" value="TAIR"/>
</dbReference>
<dbReference type="FunFam" id="3.40.50.150:FF:000439">
    <property type="entry name" value="Anamorsin homolog"/>
    <property type="match status" value="1"/>
</dbReference>
<dbReference type="Gene3D" id="3.40.50.150">
    <property type="entry name" value="Vaccinia Virus protein VP39"/>
    <property type="match status" value="1"/>
</dbReference>
<dbReference type="HAMAP" id="MF_03115">
    <property type="entry name" value="Anamorsin"/>
    <property type="match status" value="1"/>
</dbReference>
<dbReference type="InterPro" id="IPR007785">
    <property type="entry name" value="Anamorsin"/>
</dbReference>
<dbReference type="InterPro" id="IPR046408">
    <property type="entry name" value="CIAPIN1"/>
</dbReference>
<dbReference type="InterPro" id="IPR029063">
    <property type="entry name" value="SAM-dependent_MTases_sf"/>
</dbReference>
<dbReference type="PANTHER" id="PTHR13273">
    <property type="entry name" value="ANAMORSIN"/>
    <property type="match status" value="1"/>
</dbReference>
<dbReference type="PANTHER" id="PTHR13273:SF14">
    <property type="entry name" value="ANAMORSIN"/>
    <property type="match status" value="1"/>
</dbReference>
<dbReference type="Pfam" id="PF05093">
    <property type="entry name" value="CIAPIN1"/>
    <property type="match status" value="1"/>
</dbReference>
<proteinExistence type="evidence at protein level"/>
<organism>
    <name type="scientific">Arabidopsis thaliana</name>
    <name type="common">Mouse-ear cress</name>
    <dbReference type="NCBI Taxonomy" id="3702"/>
    <lineage>
        <taxon>Eukaryota</taxon>
        <taxon>Viridiplantae</taxon>
        <taxon>Streptophyta</taxon>
        <taxon>Embryophyta</taxon>
        <taxon>Tracheophyta</taxon>
        <taxon>Spermatophyta</taxon>
        <taxon>Magnoliopsida</taxon>
        <taxon>eudicotyledons</taxon>
        <taxon>Gunneridae</taxon>
        <taxon>Pentapetalae</taxon>
        <taxon>rosids</taxon>
        <taxon>malvids</taxon>
        <taxon>Brassicales</taxon>
        <taxon>Brassicaceae</taxon>
        <taxon>Camelineae</taxon>
        <taxon>Arabidopsis</taxon>
    </lineage>
</organism>
<keyword id="KW-0001">2Fe-2S</keyword>
<keyword id="KW-0004">4Fe-4S</keyword>
<keyword id="KW-0025">Alternative splicing</keyword>
<keyword id="KW-0963">Cytoplasm</keyword>
<keyword id="KW-0408">Iron</keyword>
<keyword id="KW-0411">Iron-sulfur</keyword>
<keyword id="KW-0479">Metal-binding</keyword>
<keyword id="KW-0496">Mitochondrion</keyword>
<keyword id="KW-1185">Reference proteome</keyword>
<gene>
    <name type="ordered locus">At5g18400</name>
    <name type="ORF">F20L16.120</name>
</gene>
<name>DRE2_ARATH</name>
<protein>
    <recommendedName>
        <fullName evidence="1">Anamorsin homolog</fullName>
    </recommendedName>
    <alternativeName>
        <fullName evidence="1">Fe-S cluster assembly protein DRE2 homolog</fullName>
    </alternativeName>
</protein>